<organism>
    <name type="scientific">Agrostis stolonifera</name>
    <name type="common">Creeping bentgrass</name>
    <dbReference type="NCBI Taxonomy" id="63632"/>
    <lineage>
        <taxon>Eukaryota</taxon>
        <taxon>Viridiplantae</taxon>
        <taxon>Streptophyta</taxon>
        <taxon>Embryophyta</taxon>
        <taxon>Tracheophyta</taxon>
        <taxon>Spermatophyta</taxon>
        <taxon>Magnoliopsida</taxon>
        <taxon>Liliopsida</taxon>
        <taxon>Poales</taxon>
        <taxon>Poaceae</taxon>
        <taxon>BOP clade</taxon>
        <taxon>Pooideae</taxon>
        <taxon>Poodae</taxon>
        <taxon>Poeae</taxon>
        <taxon>Poeae Chloroplast Group 1 (Aveneae type)</taxon>
        <taxon>Agrostidodinae</taxon>
        <taxon>Agrostidinae</taxon>
        <taxon>Agrostis</taxon>
    </lineage>
</organism>
<gene>
    <name type="primary">rps4</name>
</gene>
<geneLocation type="chloroplast"/>
<proteinExistence type="inferred from homology"/>
<keyword id="KW-0150">Chloroplast</keyword>
<keyword id="KW-0934">Plastid</keyword>
<keyword id="KW-0687">Ribonucleoprotein</keyword>
<keyword id="KW-0689">Ribosomal protein</keyword>
<keyword id="KW-0694">RNA-binding</keyword>
<keyword id="KW-0699">rRNA-binding</keyword>
<feature type="chain" id="PRO_0000277005" description="Small ribosomal subunit protein uS4c">
    <location>
        <begin position="1"/>
        <end position="201"/>
    </location>
</feature>
<feature type="domain" description="S4 RNA-binding">
    <location>
        <begin position="89"/>
        <end position="157"/>
    </location>
</feature>
<feature type="region of interest" description="Disordered" evidence="2">
    <location>
        <begin position="17"/>
        <end position="36"/>
    </location>
</feature>
<sequence>MSRYRGPRLKKIRRLGALPGLTRKTPKSGSNLKKKFHSGKKEQYRIRLQEKQKLRFHYGLTERQLLRYVHIAGKAKRSTGQVLLQLLEMRLDNILFRLGMASTIPGARQLVNHRHILVNGRIVNIPSFRCKPRDIITTKDNQRSKGLVQNYIASSDPGKLPKHLTIDTLEYKGLVNKILDRKWVGLKINELLVVEYYSRQT</sequence>
<protein>
    <recommendedName>
        <fullName evidence="3">Small ribosomal subunit protein uS4c</fullName>
    </recommendedName>
    <alternativeName>
        <fullName>30S ribosomal protein S4, chloroplastic</fullName>
    </alternativeName>
</protein>
<dbReference type="EMBL" id="EF115543">
    <property type="protein sequence ID" value="ABK79582.1"/>
    <property type="molecule type" value="Genomic_DNA"/>
</dbReference>
<dbReference type="RefSeq" id="YP_874738.1">
    <property type="nucleotide sequence ID" value="NC_008591.1"/>
</dbReference>
<dbReference type="SMR" id="A1EA10"/>
<dbReference type="GeneID" id="4524911"/>
<dbReference type="GO" id="GO:0009507">
    <property type="term" value="C:chloroplast"/>
    <property type="evidence" value="ECO:0007669"/>
    <property type="project" value="UniProtKB-SubCell"/>
</dbReference>
<dbReference type="GO" id="GO:0015935">
    <property type="term" value="C:small ribosomal subunit"/>
    <property type="evidence" value="ECO:0007669"/>
    <property type="project" value="InterPro"/>
</dbReference>
<dbReference type="GO" id="GO:0019843">
    <property type="term" value="F:rRNA binding"/>
    <property type="evidence" value="ECO:0007669"/>
    <property type="project" value="UniProtKB-UniRule"/>
</dbReference>
<dbReference type="GO" id="GO:0003735">
    <property type="term" value="F:structural constituent of ribosome"/>
    <property type="evidence" value="ECO:0007669"/>
    <property type="project" value="InterPro"/>
</dbReference>
<dbReference type="GO" id="GO:0042274">
    <property type="term" value="P:ribosomal small subunit biogenesis"/>
    <property type="evidence" value="ECO:0007669"/>
    <property type="project" value="TreeGrafter"/>
</dbReference>
<dbReference type="GO" id="GO:0006412">
    <property type="term" value="P:translation"/>
    <property type="evidence" value="ECO:0007669"/>
    <property type="project" value="UniProtKB-UniRule"/>
</dbReference>
<dbReference type="CDD" id="cd00165">
    <property type="entry name" value="S4"/>
    <property type="match status" value="1"/>
</dbReference>
<dbReference type="FunFam" id="1.10.1050.10:FF:000002">
    <property type="entry name" value="30S ribosomal protein S4, chloroplastic"/>
    <property type="match status" value="1"/>
</dbReference>
<dbReference type="FunFam" id="3.10.290.10:FF:000081">
    <property type="entry name" value="30S ribosomal protein S4, chloroplastic"/>
    <property type="match status" value="1"/>
</dbReference>
<dbReference type="Gene3D" id="1.10.1050.10">
    <property type="entry name" value="Ribosomal Protein S4 Delta 41, Chain A, domain 1"/>
    <property type="match status" value="1"/>
</dbReference>
<dbReference type="Gene3D" id="3.10.290.10">
    <property type="entry name" value="RNA-binding S4 domain"/>
    <property type="match status" value="1"/>
</dbReference>
<dbReference type="HAMAP" id="MF_01306_B">
    <property type="entry name" value="Ribosomal_uS4_B"/>
    <property type="match status" value="1"/>
</dbReference>
<dbReference type="InterPro" id="IPR022801">
    <property type="entry name" value="Ribosomal_uS4"/>
</dbReference>
<dbReference type="InterPro" id="IPR005709">
    <property type="entry name" value="Ribosomal_uS4_bac-type"/>
</dbReference>
<dbReference type="InterPro" id="IPR018079">
    <property type="entry name" value="Ribosomal_uS4_CS"/>
</dbReference>
<dbReference type="InterPro" id="IPR001912">
    <property type="entry name" value="Ribosomal_uS4_N"/>
</dbReference>
<dbReference type="InterPro" id="IPR002942">
    <property type="entry name" value="S4_RNA-bd"/>
</dbReference>
<dbReference type="InterPro" id="IPR036986">
    <property type="entry name" value="S4_RNA-bd_sf"/>
</dbReference>
<dbReference type="NCBIfam" id="NF003717">
    <property type="entry name" value="PRK05327.1"/>
    <property type="match status" value="1"/>
</dbReference>
<dbReference type="NCBIfam" id="TIGR01017">
    <property type="entry name" value="rpsD_bact"/>
    <property type="match status" value="1"/>
</dbReference>
<dbReference type="PANTHER" id="PTHR11831">
    <property type="entry name" value="30S 40S RIBOSOMAL PROTEIN"/>
    <property type="match status" value="1"/>
</dbReference>
<dbReference type="PANTHER" id="PTHR11831:SF4">
    <property type="entry name" value="SMALL RIBOSOMAL SUBUNIT PROTEIN US4M"/>
    <property type="match status" value="1"/>
</dbReference>
<dbReference type="Pfam" id="PF00163">
    <property type="entry name" value="Ribosomal_S4"/>
    <property type="match status" value="1"/>
</dbReference>
<dbReference type="Pfam" id="PF01479">
    <property type="entry name" value="S4"/>
    <property type="match status" value="1"/>
</dbReference>
<dbReference type="SMART" id="SM01390">
    <property type="entry name" value="Ribosomal_S4"/>
    <property type="match status" value="1"/>
</dbReference>
<dbReference type="SMART" id="SM00363">
    <property type="entry name" value="S4"/>
    <property type="match status" value="1"/>
</dbReference>
<dbReference type="SUPFAM" id="SSF55174">
    <property type="entry name" value="Alpha-L RNA-binding motif"/>
    <property type="match status" value="1"/>
</dbReference>
<dbReference type="PROSITE" id="PS00632">
    <property type="entry name" value="RIBOSOMAL_S4"/>
    <property type="match status" value="1"/>
</dbReference>
<dbReference type="PROSITE" id="PS50889">
    <property type="entry name" value="S4"/>
    <property type="match status" value="1"/>
</dbReference>
<evidence type="ECO:0000250" key="1"/>
<evidence type="ECO:0000256" key="2">
    <source>
        <dbReference type="SAM" id="MobiDB-lite"/>
    </source>
</evidence>
<evidence type="ECO:0000305" key="3"/>
<accession>A1EA10</accession>
<comment type="function">
    <text evidence="1">One of the primary rRNA binding proteins, it binds directly to 16S rRNA where it nucleates assembly of the body of the 30S subunit.</text>
</comment>
<comment type="function">
    <text evidence="1">With S5 and S12 plays an important role in translational accuracy.</text>
</comment>
<comment type="subunit">
    <text evidence="1">Part of the 30S ribosomal subunit. Contacts protein S5. The interaction surface between S4 and S5 is involved in control of translational fidelity (By similarity).</text>
</comment>
<comment type="subcellular location">
    <subcellularLocation>
        <location>Plastid</location>
        <location>Chloroplast</location>
    </subcellularLocation>
</comment>
<comment type="similarity">
    <text evidence="3">Belongs to the universal ribosomal protein uS4 family.</text>
</comment>
<name>RR4_AGRST</name>
<reference key="1">
    <citation type="journal article" date="2007" name="Theor. Appl. Genet.">
        <title>Complete chloroplast genome sequences of Hordeum vulgare, Sorghum bicolor and Agrostis stolonifera, and comparative analyses with other grass genomes.</title>
        <authorList>
            <person name="Saski C."/>
            <person name="Lee S.-B."/>
            <person name="Fjellheim S."/>
            <person name="Guda C."/>
            <person name="Jansen R.K."/>
            <person name="Luo H."/>
            <person name="Tomkins J."/>
            <person name="Rognli O.A."/>
            <person name="Daniell H."/>
            <person name="Clarke J.L."/>
        </authorList>
    </citation>
    <scope>NUCLEOTIDE SEQUENCE [LARGE SCALE GENOMIC DNA]</scope>
    <source>
        <strain>cv. Penn A-4</strain>
    </source>
</reference>